<dbReference type="EMBL" id="CP001349">
    <property type="protein sequence ID" value="ACL60222.1"/>
    <property type="molecule type" value="Genomic_DNA"/>
</dbReference>
<dbReference type="RefSeq" id="WP_015931831.1">
    <property type="nucleotide sequence ID" value="NC_011894.1"/>
</dbReference>
<dbReference type="SMR" id="B8IMM9"/>
<dbReference type="STRING" id="460265.Mnod_5377"/>
<dbReference type="KEGG" id="mno:Mnod_5377"/>
<dbReference type="eggNOG" id="COG0706">
    <property type="taxonomic scope" value="Bacteria"/>
</dbReference>
<dbReference type="HOGENOM" id="CLU_016535_1_0_5"/>
<dbReference type="OrthoDB" id="9780552at2"/>
<dbReference type="Proteomes" id="UP000008207">
    <property type="component" value="Chromosome"/>
</dbReference>
<dbReference type="GO" id="GO:0005886">
    <property type="term" value="C:plasma membrane"/>
    <property type="evidence" value="ECO:0007669"/>
    <property type="project" value="UniProtKB-SubCell"/>
</dbReference>
<dbReference type="GO" id="GO:0032977">
    <property type="term" value="F:membrane insertase activity"/>
    <property type="evidence" value="ECO:0007669"/>
    <property type="project" value="InterPro"/>
</dbReference>
<dbReference type="GO" id="GO:0051205">
    <property type="term" value="P:protein insertion into membrane"/>
    <property type="evidence" value="ECO:0007669"/>
    <property type="project" value="TreeGrafter"/>
</dbReference>
<dbReference type="GO" id="GO:0015031">
    <property type="term" value="P:protein transport"/>
    <property type="evidence" value="ECO:0007669"/>
    <property type="project" value="UniProtKB-KW"/>
</dbReference>
<dbReference type="CDD" id="cd20070">
    <property type="entry name" value="5TM_YidC_Alb3"/>
    <property type="match status" value="1"/>
</dbReference>
<dbReference type="CDD" id="cd19961">
    <property type="entry name" value="EcYidC-like_peri"/>
    <property type="match status" value="1"/>
</dbReference>
<dbReference type="Gene3D" id="2.70.98.90">
    <property type="match status" value="1"/>
</dbReference>
<dbReference type="HAMAP" id="MF_01810">
    <property type="entry name" value="YidC_type1"/>
    <property type="match status" value="1"/>
</dbReference>
<dbReference type="InterPro" id="IPR019998">
    <property type="entry name" value="Membr_insert_YidC"/>
</dbReference>
<dbReference type="InterPro" id="IPR028053">
    <property type="entry name" value="Membr_insert_YidC_N"/>
</dbReference>
<dbReference type="InterPro" id="IPR001708">
    <property type="entry name" value="YidC/ALB3/OXA1/COX18"/>
</dbReference>
<dbReference type="InterPro" id="IPR028055">
    <property type="entry name" value="YidC/Oxa/ALB_C"/>
</dbReference>
<dbReference type="InterPro" id="IPR047196">
    <property type="entry name" value="YidC_ALB_C"/>
</dbReference>
<dbReference type="InterPro" id="IPR038221">
    <property type="entry name" value="YidC_periplasmic_sf"/>
</dbReference>
<dbReference type="NCBIfam" id="NF002353">
    <property type="entry name" value="PRK01318.1-4"/>
    <property type="match status" value="1"/>
</dbReference>
<dbReference type="NCBIfam" id="TIGR03593">
    <property type="entry name" value="yidC_nterm"/>
    <property type="match status" value="1"/>
</dbReference>
<dbReference type="NCBIfam" id="TIGR03592">
    <property type="entry name" value="yidC_oxa1_cterm"/>
    <property type="match status" value="1"/>
</dbReference>
<dbReference type="PANTHER" id="PTHR12428:SF65">
    <property type="entry name" value="CYTOCHROME C OXIDASE ASSEMBLY PROTEIN COX18, MITOCHONDRIAL"/>
    <property type="match status" value="1"/>
</dbReference>
<dbReference type="PANTHER" id="PTHR12428">
    <property type="entry name" value="OXA1"/>
    <property type="match status" value="1"/>
</dbReference>
<dbReference type="Pfam" id="PF02096">
    <property type="entry name" value="60KD_IMP"/>
    <property type="match status" value="1"/>
</dbReference>
<dbReference type="Pfam" id="PF14849">
    <property type="entry name" value="YidC_periplas"/>
    <property type="match status" value="1"/>
</dbReference>
<dbReference type="PRINTS" id="PR00701">
    <property type="entry name" value="60KDINNERMP"/>
</dbReference>
<dbReference type="PRINTS" id="PR01900">
    <property type="entry name" value="YIDCPROTEIN"/>
</dbReference>
<protein>
    <recommendedName>
        <fullName evidence="1">Membrane protein insertase YidC</fullName>
    </recommendedName>
    <alternativeName>
        <fullName evidence="1">Foldase YidC</fullName>
    </alternativeName>
    <alternativeName>
        <fullName evidence="1">Membrane integrase YidC</fullName>
    </alternativeName>
    <alternativeName>
        <fullName evidence="1">Membrane protein YidC</fullName>
    </alternativeName>
</protein>
<reference key="1">
    <citation type="submission" date="2009-01" db="EMBL/GenBank/DDBJ databases">
        <title>Complete sequence of chromosome of Methylobacterium nodulans ORS 2060.</title>
        <authorList>
            <consortium name="US DOE Joint Genome Institute"/>
            <person name="Lucas S."/>
            <person name="Copeland A."/>
            <person name="Lapidus A."/>
            <person name="Glavina del Rio T."/>
            <person name="Dalin E."/>
            <person name="Tice H."/>
            <person name="Bruce D."/>
            <person name="Goodwin L."/>
            <person name="Pitluck S."/>
            <person name="Sims D."/>
            <person name="Brettin T."/>
            <person name="Detter J.C."/>
            <person name="Han C."/>
            <person name="Larimer F."/>
            <person name="Land M."/>
            <person name="Hauser L."/>
            <person name="Kyrpides N."/>
            <person name="Ivanova N."/>
            <person name="Marx C.J."/>
            <person name="Richardson P."/>
        </authorList>
    </citation>
    <scope>NUCLEOTIDE SEQUENCE [LARGE SCALE GENOMIC DNA]</scope>
    <source>
        <strain>LMG 21967 / CNCM I-2342 / ORS 2060</strain>
    </source>
</reference>
<feature type="chain" id="PRO_1000187678" description="Membrane protein insertase YidC">
    <location>
        <begin position="1"/>
        <end position="605"/>
    </location>
</feature>
<feature type="transmembrane region" description="Helical" evidence="1">
    <location>
        <begin position="8"/>
        <end position="28"/>
    </location>
</feature>
<feature type="transmembrane region" description="Helical" evidence="1">
    <location>
        <begin position="377"/>
        <end position="397"/>
    </location>
</feature>
<feature type="transmembrane region" description="Helical" evidence="1">
    <location>
        <begin position="451"/>
        <end position="471"/>
    </location>
</feature>
<feature type="transmembrane region" description="Helical" evidence="1">
    <location>
        <begin position="496"/>
        <end position="516"/>
    </location>
</feature>
<feature type="transmembrane region" description="Helical" evidence="1">
    <location>
        <begin position="540"/>
        <end position="560"/>
    </location>
</feature>
<feature type="region of interest" description="Disordered" evidence="2">
    <location>
        <begin position="35"/>
        <end position="71"/>
    </location>
</feature>
<feature type="compositionally biased region" description="Low complexity" evidence="2">
    <location>
        <begin position="35"/>
        <end position="47"/>
    </location>
</feature>
<comment type="function">
    <text evidence="1">Required for the insertion and/or proper folding and/or complex formation of integral membrane proteins into the membrane. Involved in integration of membrane proteins that insert both dependently and independently of the Sec translocase complex, as well as at least some lipoproteins. Aids folding of multispanning membrane proteins.</text>
</comment>
<comment type="subunit">
    <text evidence="1">Interacts with the Sec translocase complex via SecD. Specifically interacts with transmembrane segments of nascent integral membrane proteins during membrane integration.</text>
</comment>
<comment type="subcellular location">
    <subcellularLocation>
        <location evidence="1">Cell inner membrane</location>
        <topology evidence="1">Multi-pass membrane protein</topology>
    </subcellularLocation>
</comment>
<comment type="similarity">
    <text evidence="1">Belongs to the OXA1/ALB3/YidC family. Type 1 subfamily.</text>
</comment>
<keyword id="KW-0997">Cell inner membrane</keyword>
<keyword id="KW-1003">Cell membrane</keyword>
<keyword id="KW-0143">Chaperone</keyword>
<keyword id="KW-0472">Membrane</keyword>
<keyword id="KW-0653">Protein transport</keyword>
<keyword id="KW-1185">Reference proteome</keyword>
<keyword id="KW-0812">Transmembrane</keyword>
<keyword id="KW-1133">Transmembrane helix</keyword>
<keyword id="KW-0813">Transport</keyword>
<evidence type="ECO:0000255" key="1">
    <source>
        <dbReference type="HAMAP-Rule" id="MF_01810"/>
    </source>
</evidence>
<evidence type="ECO:0000256" key="2">
    <source>
        <dbReference type="SAM" id="MobiDB-lite"/>
    </source>
</evidence>
<accession>B8IMM9</accession>
<proteinExistence type="inferred from homology"/>
<gene>
    <name evidence="1" type="primary">yidC</name>
    <name type="ordered locus">Mnod_5377</name>
</gene>
<name>YIDC_METNO</name>
<sequence>MGNDKTNMIIAIALSLAVLLGWNYFVAAPQVERQRQQQAQTSASPSPKEGGPSAPVPGTLPGASGGNPQAALTREEALARSPRVRIDTEALKGSVALKGGRIDDVALKGYHETVDPKSPEIVLLSPAGSANPYYAEFGWVGQGAGPLPNGDTVWTADGDLLTAKKPLTLTWDNGAGLVFRRTLSVDDKYMFTVEDSVENKGQSAVTLYPYGLVSRWGKPHTQGYYVLHEGLIGVLGDKGLQEYTYDKMAKENPLGSPGTRGLSWPGVTGGFLGITDKYWAAATIPDQKTPYTGSFTERDEGATKVYQTSSLGEARTLAPGAGVQASQHLFAGAKEVSTIDAYRQKLDIKQFDLMIDWGWFYFITKPMFKALDFFYKLFGNFGVSILVVTLILKLFFLPIANRSYVSMAKMKAVQPEMTAIRERYADDKVKQQQAMMELYRKEKINPVAGCWPVVIQIPVFFALYKVLFVTIEMRHAPFFGWIRDLAAPDPTSVLNLFGLLPFAAPDLVHLGVWPIVMGITMFLQMKMNPAPPDPVQAQVFTFMPIIFTFMLGSFPAGLVIYWAWNNLLSILQQYWIMRRNGVKVELWDNLRTTFSRSSPVKAAKG</sequence>
<organism>
    <name type="scientific">Methylobacterium nodulans (strain LMG 21967 / CNCM I-2342 / ORS 2060)</name>
    <dbReference type="NCBI Taxonomy" id="460265"/>
    <lineage>
        <taxon>Bacteria</taxon>
        <taxon>Pseudomonadati</taxon>
        <taxon>Pseudomonadota</taxon>
        <taxon>Alphaproteobacteria</taxon>
        <taxon>Hyphomicrobiales</taxon>
        <taxon>Methylobacteriaceae</taxon>
        <taxon>Methylobacterium</taxon>
    </lineage>
</organism>